<proteinExistence type="inferred from homology"/>
<gene>
    <name evidence="1" type="primary">nadK</name>
    <name type="ordered locus">EUBREC_2207</name>
</gene>
<keyword id="KW-0067">ATP-binding</keyword>
<keyword id="KW-0963">Cytoplasm</keyword>
<keyword id="KW-0418">Kinase</keyword>
<keyword id="KW-0520">NAD</keyword>
<keyword id="KW-0521">NADP</keyword>
<keyword id="KW-0547">Nucleotide-binding</keyword>
<keyword id="KW-0808">Transferase</keyword>
<comment type="function">
    <text evidence="1">Involved in the regulation of the intracellular balance of NAD and NADP, and is a key enzyme in the biosynthesis of NADP. Catalyzes specifically the phosphorylation on 2'-hydroxyl of the adenosine moiety of NAD to yield NADP.</text>
</comment>
<comment type="catalytic activity">
    <reaction evidence="1">
        <text>NAD(+) + ATP = ADP + NADP(+) + H(+)</text>
        <dbReference type="Rhea" id="RHEA:18629"/>
        <dbReference type="ChEBI" id="CHEBI:15378"/>
        <dbReference type="ChEBI" id="CHEBI:30616"/>
        <dbReference type="ChEBI" id="CHEBI:57540"/>
        <dbReference type="ChEBI" id="CHEBI:58349"/>
        <dbReference type="ChEBI" id="CHEBI:456216"/>
        <dbReference type="EC" id="2.7.1.23"/>
    </reaction>
</comment>
<comment type="cofactor">
    <cofactor evidence="1">
        <name>a divalent metal cation</name>
        <dbReference type="ChEBI" id="CHEBI:60240"/>
    </cofactor>
</comment>
<comment type="subcellular location">
    <subcellularLocation>
        <location evidence="1">Cytoplasm</location>
    </subcellularLocation>
</comment>
<comment type="similarity">
    <text evidence="1">Belongs to the NAD kinase family.</text>
</comment>
<reference key="1">
    <citation type="journal article" date="2009" name="Proc. Natl. Acad. Sci. U.S.A.">
        <title>Characterizing a model human gut microbiota composed of members of its two dominant bacterial phyla.</title>
        <authorList>
            <person name="Mahowald M.A."/>
            <person name="Rey F.E."/>
            <person name="Seedorf H."/>
            <person name="Turnbaugh P.J."/>
            <person name="Fulton R.S."/>
            <person name="Wollam A."/>
            <person name="Shah N."/>
            <person name="Wang C."/>
            <person name="Magrini V."/>
            <person name="Wilson R.K."/>
            <person name="Cantarel B.L."/>
            <person name="Coutinho P.M."/>
            <person name="Henrissat B."/>
            <person name="Crock L.W."/>
            <person name="Russell A."/>
            <person name="Verberkmoes N.C."/>
            <person name="Hettich R.L."/>
            <person name="Gordon J.I."/>
        </authorList>
    </citation>
    <scope>NUCLEOTIDE SEQUENCE [LARGE SCALE GENOMIC DNA]</scope>
    <source>
        <strain>ATCC 33656 / DSM 3377 / JCM 17463 / KCTC 5835 / LMG 30912 / VPI 0990</strain>
    </source>
</reference>
<feature type="chain" id="PRO_1000205416" description="NAD kinase">
    <location>
        <begin position="1"/>
        <end position="283"/>
    </location>
</feature>
<feature type="active site" description="Proton acceptor" evidence="1">
    <location>
        <position position="66"/>
    </location>
</feature>
<feature type="binding site" evidence="1">
    <location>
        <begin position="66"/>
        <end position="67"/>
    </location>
    <ligand>
        <name>NAD(+)</name>
        <dbReference type="ChEBI" id="CHEBI:57540"/>
    </ligand>
</feature>
<feature type="binding site" evidence="1">
    <location>
        <position position="71"/>
    </location>
    <ligand>
        <name>NAD(+)</name>
        <dbReference type="ChEBI" id="CHEBI:57540"/>
    </ligand>
</feature>
<feature type="binding site" evidence="1">
    <location>
        <begin position="137"/>
        <end position="138"/>
    </location>
    <ligand>
        <name>NAD(+)</name>
        <dbReference type="ChEBI" id="CHEBI:57540"/>
    </ligand>
</feature>
<feature type="binding site" evidence="1">
    <location>
        <position position="165"/>
    </location>
    <ligand>
        <name>NAD(+)</name>
        <dbReference type="ChEBI" id="CHEBI:57540"/>
    </ligand>
</feature>
<feature type="binding site" evidence="1">
    <location>
        <position position="167"/>
    </location>
    <ligand>
        <name>NAD(+)</name>
        <dbReference type="ChEBI" id="CHEBI:57540"/>
    </ligand>
</feature>
<feature type="binding site" evidence="1">
    <location>
        <begin position="178"/>
        <end position="183"/>
    </location>
    <ligand>
        <name>NAD(+)</name>
        <dbReference type="ChEBI" id="CHEBI:57540"/>
    </ligand>
</feature>
<name>NADK_AGARV</name>
<dbReference type="EC" id="2.7.1.23" evidence="1"/>
<dbReference type="EMBL" id="CP001107">
    <property type="protein sequence ID" value="ACR75947.1"/>
    <property type="molecule type" value="Genomic_DNA"/>
</dbReference>
<dbReference type="RefSeq" id="WP_012743042.1">
    <property type="nucleotide sequence ID" value="NC_012781.1"/>
</dbReference>
<dbReference type="SMR" id="C4ZCY4"/>
<dbReference type="STRING" id="515619.EUBREC_2207"/>
<dbReference type="PaxDb" id="515619-EUBREC_2207"/>
<dbReference type="GeneID" id="86988983"/>
<dbReference type="KEGG" id="ere:EUBREC_2207"/>
<dbReference type="HOGENOM" id="CLU_008831_0_0_9"/>
<dbReference type="Proteomes" id="UP000001477">
    <property type="component" value="Chromosome"/>
</dbReference>
<dbReference type="GO" id="GO:0005737">
    <property type="term" value="C:cytoplasm"/>
    <property type="evidence" value="ECO:0007669"/>
    <property type="project" value="UniProtKB-SubCell"/>
</dbReference>
<dbReference type="GO" id="GO:0005524">
    <property type="term" value="F:ATP binding"/>
    <property type="evidence" value="ECO:0007669"/>
    <property type="project" value="UniProtKB-KW"/>
</dbReference>
<dbReference type="GO" id="GO:0046872">
    <property type="term" value="F:metal ion binding"/>
    <property type="evidence" value="ECO:0007669"/>
    <property type="project" value="UniProtKB-UniRule"/>
</dbReference>
<dbReference type="GO" id="GO:0051287">
    <property type="term" value="F:NAD binding"/>
    <property type="evidence" value="ECO:0007669"/>
    <property type="project" value="UniProtKB-ARBA"/>
</dbReference>
<dbReference type="GO" id="GO:0003951">
    <property type="term" value="F:NAD+ kinase activity"/>
    <property type="evidence" value="ECO:0007669"/>
    <property type="project" value="UniProtKB-UniRule"/>
</dbReference>
<dbReference type="GO" id="GO:0019674">
    <property type="term" value="P:NAD metabolic process"/>
    <property type="evidence" value="ECO:0007669"/>
    <property type="project" value="InterPro"/>
</dbReference>
<dbReference type="GO" id="GO:0006741">
    <property type="term" value="P:NADP biosynthetic process"/>
    <property type="evidence" value="ECO:0007669"/>
    <property type="project" value="UniProtKB-UniRule"/>
</dbReference>
<dbReference type="Gene3D" id="3.40.50.10330">
    <property type="entry name" value="Probable inorganic polyphosphate/atp-NAD kinase, domain 1"/>
    <property type="match status" value="1"/>
</dbReference>
<dbReference type="Gene3D" id="2.60.200.30">
    <property type="entry name" value="Probable inorganic polyphosphate/atp-NAD kinase, domain 2"/>
    <property type="match status" value="1"/>
</dbReference>
<dbReference type="HAMAP" id="MF_00361">
    <property type="entry name" value="NAD_kinase"/>
    <property type="match status" value="1"/>
</dbReference>
<dbReference type="InterPro" id="IPR017438">
    <property type="entry name" value="ATP-NAD_kinase_N"/>
</dbReference>
<dbReference type="InterPro" id="IPR017437">
    <property type="entry name" value="ATP-NAD_kinase_PpnK-typ_C"/>
</dbReference>
<dbReference type="InterPro" id="IPR016064">
    <property type="entry name" value="NAD/diacylglycerol_kinase_sf"/>
</dbReference>
<dbReference type="InterPro" id="IPR002504">
    <property type="entry name" value="NADK"/>
</dbReference>
<dbReference type="PANTHER" id="PTHR20275">
    <property type="entry name" value="NAD KINASE"/>
    <property type="match status" value="1"/>
</dbReference>
<dbReference type="PANTHER" id="PTHR20275:SF0">
    <property type="entry name" value="NAD KINASE"/>
    <property type="match status" value="1"/>
</dbReference>
<dbReference type="Pfam" id="PF01513">
    <property type="entry name" value="NAD_kinase"/>
    <property type="match status" value="1"/>
</dbReference>
<dbReference type="Pfam" id="PF20143">
    <property type="entry name" value="NAD_kinase_C"/>
    <property type="match status" value="1"/>
</dbReference>
<dbReference type="SUPFAM" id="SSF111331">
    <property type="entry name" value="NAD kinase/diacylglycerol kinase-like"/>
    <property type="match status" value="1"/>
</dbReference>
<accession>C4ZCY4</accession>
<sequence>MKHFVVIANAYKDRDFALTNKIVAYIEQKGGTAKGLMSNVEAISDNEFELEDIPQDTQCILVLGGDGTLIRAATRVETLEIPLMGVNLGTLGYLCEVEEATVFDAIDSLMADKYMTEDRIMLIGHKRGSETSRVALNDIVIHRKGNLQILSLNVYVNGEFLNNYHADGIIVATPTGSTGYSMSAGGPIVDPKGDMILLTPNNAHNLTSKSIVLSGDDEIEIEILSRREQNDELACVSYDGDTTAELAVGDRFVISRAANHTKICKLHQRSFLEILRKKMGNYS</sequence>
<organism>
    <name type="scientific">Agathobacter rectalis (strain ATCC 33656 / DSM 3377 / JCM 17463 / KCTC 5835 / VPI 0990)</name>
    <name type="common">Eubacterium rectale</name>
    <dbReference type="NCBI Taxonomy" id="515619"/>
    <lineage>
        <taxon>Bacteria</taxon>
        <taxon>Bacillati</taxon>
        <taxon>Bacillota</taxon>
        <taxon>Clostridia</taxon>
        <taxon>Lachnospirales</taxon>
        <taxon>Lachnospiraceae</taxon>
        <taxon>Agathobacter</taxon>
    </lineage>
</organism>
<evidence type="ECO:0000255" key="1">
    <source>
        <dbReference type="HAMAP-Rule" id="MF_00361"/>
    </source>
</evidence>
<protein>
    <recommendedName>
        <fullName evidence="1">NAD kinase</fullName>
        <ecNumber evidence="1">2.7.1.23</ecNumber>
    </recommendedName>
    <alternativeName>
        <fullName evidence="1">ATP-dependent NAD kinase</fullName>
    </alternativeName>
</protein>